<evidence type="ECO:0000255" key="1">
    <source>
        <dbReference type="HAMAP-Rule" id="MF_01187"/>
    </source>
</evidence>
<proteinExistence type="inferred from homology"/>
<gene>
    <name type="ordered locus">BTH_I0741</name>
</gene>
<organism>
    <name type="scientific">Burkholderia thailandensis (strain ATCC 700388 / DSM 13276 / CCUG 48851 / CIP 106301 / E264)</name>
    <dbReference type="NCBI Taxonomy" id="271848"/>
    <lineage>
        <taxon>Bacteria</taxon>
        <taxon>Pseudomonadati</taxon>
        <taxon>Pseudomonadota</taxon>
        <taxon>Betaproteobacteria</taxon>
        <taxon>Burkholderiales</taxon>
        <taxon>Burkholderiaceae</taxon>
        <taxon>Burkholderia</taxon>
        <taxon>pseudomallei group</taxon>
    </lineage>
</organism>
<reference key="1">
    <citation type="journal article" date="2005" name="BMC Genomics">
        <title>Bacterial genome adaptation to niches: divergence of the potential virulence genes in three Burkholderia species of different survival strategies.</title>
        <authorList>
            <person name="Kim H.S."/>
            <person name="Schell M.A."/>
            <person name="Yu Y."/>
            <person name="Ulrich R.L."/>
            <person name="Sarria S.H."/>
            <person name="Nierman W.C."/>
            <person name="DeShazer D."/>
        </authorList>
    </citation>
    <scope>NUCLEOTIDE SEQUENCE [LARGE SCALE GENOMIC DNA]</scope>
    <source>
        <strain>ATCC 700388 / DSM 13276 / CCUG 48851 / CIP 106301 / E264</strain>
    </source>
</reference>
<accession>Q2T0K2</accession>
<feature type="chain" id="PRO_0000291078" description="UPF0434 protein BTH_I0741">
    <location>
        <begin position="1"/>
        <end position="68"/>
    </location>
</feature>
<sequence length="68" mass="7343">MDARLLEILVCPVCKGPLHYDRGAQELVCNADKLAYPIRDGIPVMLVDEARQTVEGTPVDPAGPAQGR</sequence>
<dbReference type="EMBL" id="CP000086">
    <property type="protein sequence ID" value="ABC36563.1"/>
    <property type="molecule type" value="Genomic_DNA"/>
</dbReference>
<dbReference type="RefSeq" id="WP_009892651.1">
    <property type="nucleotide sequence ID" value="NZ_CP008785.1"/>
</dbReference>
<dbReference type="SMR" id="Q2T0K2"/>
<dbReference type="GeneID" id="45120498"/>
<dbReference type="KEGG" id="bte:BTH_I0741"/>
<dbReference type="HOGENOM" id="CLU_155659_3_0_4"/>
<dbReference type="Proteomes" id="UP000001930">
    <property type="component" value="Chromosome I"/>
</dbReference>
<dbReference type="GO" id="GO:0005829">
    <property type="term" value="C:cytosol"/>
    <property type="evidence" value="ECO:0007669"/>
    <property type="project" value="TreeGrafter"/>
</dbReference>
<dbReference type="FunFam" id="2.20.25.10:FF:000002">
    <property type="entry name" value="UPF0434 protein YcaR"/>
    <property type="match status" value="1"/>
</dbReference>
<dbReference type="Gene3D" id="2.20.25.10">
    <property type="match status" value="1"/>
</dbReference>
<dbReference type="HAMAP" id="MF_01187">
    <property type="entry name" value="UPF0434"/>
    <property type="match status" value="1"/>
</dbReference>
<dbReference type="InterPro" id="IPR005651">
    <property type="entry name" value="Trm112-like"/>
</dbReference>
<dbReference type="NCBIfam" id="TIGR01053">
    <property type="entry name" value="LSD1"/>
    <property type="match status" value="1"/>
</dbReference>
<dbReference type="PANTHER" id="PTHR33505:SF4">
    <property type="entry name" value="PROTEIN PREY, MITOCHONDRIAL"/>
    <property type="match status" value="1"/>
</dbReference>
<dbReference type="PANTHER" id="PTHR33505">
    <property type="entry name" value="ZGC:162634"/>
    <property type="match status" value="1"/>
</dbReference>
<dbReference type="Pfam" id="PF03966">
    <property type="entry name" value="Trm112p"/>
    <property type="match status" value="1"/>
</dbReference>
<dbReference type="SUPFAM" id="SSF158997">
    <property type="entry name" value="Trm112p-like"/>
    <property type="match status" value="1"/>
</dbReference>
<name>Y741_BURTA</name>
<protein>
    <recommendedName>
        <fullName evidence="1">UPF0434 protein BTH_I0741</fullName>
    </recommendedName>
</protein>
<comment type="similarity">
    <text evidence="1">Belongs to the UPF0434 family.</text>
</comment>